<accession>C4LFH4</accession>
<reference key="1">
    <citation type="submission" date="2009-05" db="EMBL/GenBank/DDBJ databases">
        <title>Complete sequence of Tolumonas auensis DSM 9187.</title>
        <authorList>
            <consortium name="US DOE Joint Genome Institute"/>
            <person name="Lucas S."/>
            <person name="Copeland A."/>
            <person name="Lapidus A."/>
            <person name="Glavina del Rio T."/>
            <person name="Tice H."/>
            <person name="Bruce D."/>
            <person name="Goodwin L."/>
            <person name="Pitluck S."/>
            <person name="Chertkov O."/>
            <person name="Brettin T."/>
            <person name="Detter J.C."/>
            <person name="Han C."/>
            <person name="Larimer F."/>
            <person name="Land M."/>
            <person name="Hauser L."/>
            <person name="Kyrpides N."/>
            <person name="Mikhailova N."/>
            <person name="Spring S."/>
            <person name="Beller H."/>
        </authorList>
    </citation>
    <scope>NUCLEOTIDE SEQUENCE [LARGE SCALE GENOMIC DNA]</scope>
    <source>
        <strain>DSM 9187 / NBRC 110442 / TA 4</strain>
    </source>
</reference>
<keyword id="KW-1185">Reference proteome</keyword>
<keyword id="KW-0687">Ribonucleoprotein</keyword>
<keyword id="KW-0689">Ribosomal protein</keyword>
<keyword id="KW-0694">RNA-binding</keyword>
<keyword id="KW-0699">rRNA-binding</keyword>
<organism>
    <name type="scientific">Tolumonas auensis (strain DSM 9187 / NBRC 110442 / TA 4)</name>
    <dbReference type="NCBI Taxonomy" id="595494"/>
    <lineage>
        <taxon>Bacteria</taxon>
        <taxon>Pseudomonadati</taxon>
        <taxon>Pseudomonadota</taxon>
        <taxon>Gammaproteobacteria</taxon>
        <taxon>Aeromonadales</taxon>
        <taxon>Aeromonadaceae</taxon>
        <taxon>Tolumonas</taxon>
    </lineage>
</organism>
<proteinExistence type="inferred from homology"/>
<evidence type="ECO:0000255" key="1">
    <source>
        <dbReference type="HAMAP-Rule" id="MF_01336"/>
    </source>
</evidence>
<evidence type="ECO:0000305" key="2"/>
<dbReference type="EMBL" id="CP001616">
    <property type="protein sequence ID" value="ACQ93341.1"/>
    <property type="molecule type" value="Genomic_DNA"/>
</dbReference>
<dbReference type="RefSeq" id="WP_015878812.1">
    <property type="nucleotide sequence ID" value="NC_012691.1"/>
</dbReference>
<dbReference type="SMR" id="C4LFH4"/>
<dbReference type="STRING" id="595494.Tola_1731"/>
<dbReference type="KEGG" id="tau:Tola_1731"/>
<dbReference type="eggNOG" id="COG1825">
    <property type="taxonomic scope" value="Bacteria"/>
</dbReference>
<dbReference type="HOGENOM" id="CLU_137946_0_0_6"/>
<dbReference type="OrthoDB" id="9806411at2"/>
<dbReference type="Proteomes" id="UP000009073">
    <property type="component" value="Chromosome"/>
</dbReference>
<dbReference type="GO" id="GO:0022625">
    <property type="term" value="C:cytosolic large ribosomal subunit"/>
    <property type="evidence" value="ECO:0007669"/>
    <property type="project" value="TreeGrafter"/>
</dbReference>
<dbReference type="GO" id="GO:0008097">
    <property type="term" value="F:5S rRNA binding"/>
    <property type="evidence" value="ECO:0007669"/>
    <property type="project" value="InterPro"/>
</dbReference>
<dbReference type="GO" id="GO:0003735">
    <property type="term" value="F:structural constituent of ribosome"/>
    <property type="evidence" value="ECO:0007669"/>
    <property type="project" value="InterPro"/>
</dbReference>
<dbReference type="GO" id="GO:0006412">
    <property type="term" value="P:translation"/>
    <property type="evidence" value="ECO:0007669"/>
    <property type="project" value="UniProtKB-UniRule"/>
</dbReference>
<dbReference type="CDD" id="cd00495">
    <property type="entry name" value="Ribosomal_L25_TL5_CTC"/>
    <property type="match status" value="1"/>
</dbReference>
<dbReference type="FunFam" id="2.40.240.10:FF:000002">
    <property type="entry name" value="50S ribosomal protein L25"/>
    <property type="match status" value="1"/>
</dbReference>
<dbReference type="Gene3D" id="2.40.240.10">
    <property type="entry name" value="Ribosomal Protein L25, Chain P"/>
    <property type="match status" value="1"/>
</dbReference>
<dbReference type="HAMAP" id="MF_01336">
    <property type="entry name" value="Ribosomal_bL25"/>
    <property type="match status" value="1"/>
</dbReference>
<dbReference type="InterPro" id="IPR020056">
    <property type="entry name" value="Rbsml_bL25/Gln-tRNA_synth_N"/>
</dbReference>
<dbReference type="InterPro" id="IPR011035">
    <property type="entry name" value="Ribosomal_bL25/Gln-tRNA_synth"/>
</dbReference>
<dbReference type="InterPro" id="IPR001021">
    <property type="entry name" value="Ribosomal_bL25_long"/>
</dbReference>
<dbReference type="InterPro" id="IPR020055">
    <property type="entry name" value="Ribosomal_bL25_short"/>
</dbReference>
<dbReference type="InterPro" id="IPR029751">
    <property type="entry name" value="Ribosomal_L25_dom"/>
</dbReference>
<dbReference type="InterPro" id="IPR020930">
    <property type="entry name" value="Ribosomal_uL5_bac-type"/>
</dbReference>
<dbReference type="NCBIfam" id="TIGR00731">
    <property type="entry name" value="bL25_bact_ctc"/>
    <property type="match status" value="1"/>
</dbReference>
<dbReference type="NCBIfam" id="NF004612">
    <property type="entry name" value="PRK05943.1"/>
    <property type="match status" value="1"/>
</dbReference>
<dbReference type="PANTHER" id="PTHR33284">
    <property type="entry name" value="RIBOSOMAL PROTEIN L25/GLN-TRNA SYNTHETASE, ANTI-CODON-BINDING DOMAIN-CONTAINING PROTEIN"/>
    <property type="match status" value="1"/>
</dbReference>
<dbReference type="PANTHER" id="PTHR33284:SF1">
    <property type="entry name" value="RIBOSOMAL PROTEIN L25_GLN-TRNA SYNTHETASE, ANTI-CODON-BINDING DOMAIN-CONTAINING PROTEIN"/>
    <property type="match status" value="1"/>
</dbReference>
<dbReference type="Pfam" id="PF01386">
    <property type="entry name" value="Ribosomal_L25p"/>
    <property type="match status" value="1"/>
</dbReference>
<dbReference type="SUPFAM" id="SSF50715">
    <property type="entry name" value="Ribosomal protein L25-like"/>
    <property type="match status" value="1"/>
</dbReference>
<comment type="function">
    <text evidence="1">This is one of the proteins that binds to the 5S RNA in the ribosome where it forms part of the central protuberance.</text>
</comment>
<comment type="subunit">
    <text evidence="1">Part of the 50S ribosomal subunit; part of the 5S rRNA/L5/L18/L25 subcomplex. Contacts the 5S rRNA. Binds to the 5S rRNA independently of L5 and L18.</text>
</comment>
<comment type="similarity">
    <text evidence="1">Belongs to the bacterial ribosomal protein bL25 family.</text>
</comment>
<protein>
    <recommendedName>
        <fullName evidence="1">Large ribosomal subunit protein bL25</fullName>
    </recommendedName>
    <alternativeName>
        <fullName evidence="2">50S ribosomal protein L25</fullName>
    </alternativeName>
</protein>
<feature type="chain" id="PRO_1000214663" description="Large ribosomal subunit protein bL25">
    <location>
        <begin position="1"/>
        <end position="95"/>
    </location>
</feature>
<gene>
    <name evidence="1" type="primary">rplY</name>
    <name type="ordered locus">Tola_1731</name>
</gene>
<name>RL25_TOLAT</name>
<sequence length="95" mass="10498">MSFTFQTEVRADLGKGASRRLRRAEQVPAILYGAGQEAVSLVLDHNKVITAQQEAAFYSEVLTLVVDGKEVKVKVAAVQRHPVKPKVVHLDFIRA</sequence>